<accession>Q73NV5</accession>
<organism>
    <name type="scientific">Treponema denticola (strain ATCC 35405 / DSM 14222 / CIP 103919 / JCM 8153 / KCTC 15104)</name>
    <dbReference type="NCBI Taxonomy" id="243275"/>
    <lineage>
        <taxon>Bacteria</taxon>
        <taxon>Pseudomonadati</taxon>
        <taxon>Spirochaetota</taxon>
        <taxon>Spirochaetia</taxon>
        <taxon>Spirochaetales</taxon>
        <taxon>Treponemataceae</taxon>
        <taxon>Treponema</taxon>
    </lineage>
</organism>
<feature type="chain" id="PRO_0000146345" description="Small ribosomal subunit protein uS12">
    <location>
        <begin position="1"/>
        <end position="124"/>
    </location>
</feature>
<feature type="region of interest" description="Disordered" evidence="3">
    <location>
        <begin position="104"/>
        <end position="124"/>
    </location>
</feature>
<feature type="compositionally biased region" description="Basic residues" evidence="3">
    <location>
        <begin position="112"/>
        <end position="124"/>
    </location>
</feature>
<feature type="modified residue" description="3-methylthioaspartic acid" evidence="1">
    <location>
        <position position="89"/>
    </location>
</feature>
<name>RS12_TREDE</name>
<protein>
    <recommendedName>
        <fullName evidence="2">Small ribosomal subunit protein uS12</fullName>
    </recommendedName>
    <alternativeName>
        <fullName evidence="4">30S ribosomal protein S12</fullName>
    </alternativeName>
</protein>
<comment type="function">
    <text evidence="2">With S4 and S5 plays an important role in translational accuracy.</text>
</comment>
<comment type="function">
    <text evidence="2">Interacts with and stabilizes bases of the 16S rRNA that are involved in tRNA selection in the A site and with the mRNA backbone. Located at the interface of the 30S and 50S subunits, it traverses the body of the 30S subunit contacting proteins on the other side and probably holding the rRNA structure together. The combined cluster of proteins S8, S12 and S17 appears to hold together the shoulder and platform of the 30S subunit.</text>
</comment>
<comment type="subunit">
    <text evidence="2">Part of the 30S ribosomal subunit. Contacts proteins S8 and S17. May interact with IF1 in the 30S initiation complex.</text>
</comment>
<comment type="similarity">
    <text evidence="2">Belongs to the universal ribosomal protein uS12 family.</text>
</comment>
<evidence type="ECO:0000250" key="1"/>
<evidence type="ECO:0000255" key="2">
    <source>
        <dbReference type="HAMAP-Rule" id="MF_00403"/>
    </source>
</evidence>
<evidence type="ECO:0000256" key="3">
    <source>
        <dbReference type="SAM" id="MobiDB-lite"/>
    </source>
</evidence>
<evidence type="ECO:0000305" key="4"/>
<proteinExistence type="inferred from homology"/>
<sequence>MPTINQLIKKGRKSAAVKTKSPALQSCPQKRGVCTSVKTITPKKPNSALRKVARIRLSNGIEVTAYIPGIGHNLQEHSVVLVRGGRVKDLPGVRYHIIRGTKDALGVEDRKRGRSKYGAKRPKA</sequence>
<keyword id="KW-0488">Methylation</keyword>
<keyword id="KW-1185">Reference proteome</keyword>
<keyword id="KW-0687">Ribonucleoprotein</keyword>
<keyword id="KW-0689">Ribosomal protein</keyword>
<keyword id="KW-0694">RNA-binding</keyword>
<keyword id="KW-0699">rRNA-binding</keyword>
<keyword id="KW-0820">tRNA-binding</keyword>
<dbReference type="EMBL" id="AE017226">
    <property type="protein sequence ID" value="AAS11536.1"/>
    <property type="molecule type" value="Genomic_DNA"/>
</dbReference>
<dbReference type="RefSeq" id="NP_971655.1">
    <property type="nucleotide sequence ID" value="NC_002967.9"/>
</dbReference>
<dbReference type="RefSeq" id="WP_002670535.1">
    <property type="nucleotide sequence ID" value="NC_002967.9"/>
</dbReference>
<dbReference type="SMR" id="Q73NV5"/>
<dbReference type="STRING" id="243275.TDE_1047"/>
<dbReference type="PaxDb" id="243275-TDE_1047"/>
<dbReference type="GeneID" id="2741321"/>
<dbReference type="KEGG" id="tde:TDE_1047"/>
<dbReference type="PATRIC" id="fig|243275.7.peg.1007"/>
<dbReference type="eggNOG" id="COG0048">
    <property type="taxonomic scope" value="Bacteria"/>
</dbReference>
<dbReference type="HOGENOM" id="CLU_104295_1_2_12"/>
<dbReference type="OrthoDB" id="9802366at2"/>
<dbReference type="Proteomes" id="UP000008212">
    <property type="component" value="Chromosome"/>
</dbReference>
<dbReference type="GO" id="GO:0015935">
    <property type="term" value="C:small ribosomal subunit"/>
    <property type="evidence" value="ECO:0007669"/>
    <property type="project" value="InterPro"/>
</dbReference>
<dbReference type="GO" id="GO:0019843">
    <property type="term" value="F:rRNA binding"/>
    <property type="evidence" value="ECO:0007669"/>
    <property type="project" value="UniProtKB-UniRule"/>
</dbReference>
<dbReference type="GO" id="GO:0003735">
    <property type="term" value="F:structural constituent of ribosome"/>
    <property type="evidence" value="ECO:0007669"/>
    <property type="project" value="InterPro"/>
</dbReference>
<dbReference type="GO" id="GO:0000049">
    <property type="term" value="F:tRNA binding"/>
    <property type="evidence" value="ECO:0007669"/>
    <property type="project" value="UniProtKB-UniRule"/>
</dbReference>
<dbReference type="GO" id="GO:0006412">
    <property type="term" value="P:translation"/>
    <property type="evidence" value="ECO:0007669"/>
    <property type="project" value="UniProtKB-UniRule"/>
</dbReference>
<dbReference type="CDD" id="cd03368">
    <property type="entry name" value="Ribosomal_S12"/>
    <property type="match status" value="1"/>
</dbReference>
<dbReference type="FunFam" id="2.40.50.140:FF:000001">
    <property type="entry name" value="30S ribosomal protein S12"/>
    <property type="match status" value="1"/>
</dbReference>
<dbReference type="Gene3D" id="2.40.50.140">
    <property type="entry name" value="Nucleic acid-binding proteins"/>
    <property type="match status" value="1"/>
</dbReference>
<dbReference type="HAMAP" id="MF_00403_B">
    <property type="entry name" value="Ribosomal_uS12_B"/>
    <property type="match status" value="1"/>
</dbReference>
<dbReference type="InterPro" id="IPR012340">
    <property type="entry name" value="NA-bd_OB-fold"/>
</dbReference>
<dbReference type="InterPro" id="IPR006032">
    <property type="entry name" value="Ribosomal_uS12"/>
</dbReference>
<dbReference type="InterPro" id="IPR005679">
    <property type="entry name" value="Ribosomal_uS12_bac"/>
</dbReference>
<dbReference type="NCBIfam" id="TIGR00981">
    <property type="entry name" value="rpsL_bact"/>
    <property type="match status" value="1"/>
</dbReference>
<dbReference type="PANTHER" id="PTHR11652">
    <property type="entry name" value="30S RIBOSOMAL PROTEIN S12 FAMILY MEMBER"/>
    <property type="match status" value="1"/>
</dbReference>
<dbReference type="Pfam" id="PF00164">
    <property type="entry name" value="Ribosom_S12_S23"/>
    <property type="match status" value="1"/>
</dbReference>
<dbReference type="PIRSF" id="PIRSF002133">
    <property type="entry name" value="Ribosomal_S12/S23"/>
    <property type="match status" value="1"/>
</dbReference>
<dbReference type="PRINTS" id="PR01034">
    <property type="entry name" value="RIBOSOMALS12"/>
</dbReference>
<dbReference type="SUPFAM" id="SSF50249">
    <property type="entry name" value="Nucleic acid-binding proteins"/>
    <property type="match status" value="1"/>
</dbReference>
<dbReference type="PROSITE" id="PS00055">
    <property type="entry name" value="RIBOSOMAL_S12"/>
    <property type="match status" value="1"/>
</dbReference>
<reference key="1">
    <citation type="journal article" date="2004" name="Proc. Natl. Acad. Sci. U.S.A.">
        <title>Comparison of the genome of the oral pathogen Treponema denticola with other spirochete genomes.</title>
        <authorList>
            <person name="Seshadri R."/>
            <person name="Myers G.S.A."/>
            <person name="Tettelin H."/>
            <person name="Eisen J.A."/>
            <person name="Heidelberg J.F."/>
            <person name="Dodson R.J."/>
            <person name="Davidsen T.M."/>
            <person name="DeBoy R.T."/>
            <person name="Fouts D.E."/>
            <person name="Haft D.H."/>
            <person name="Selengut J."/>
            <person name="Ren Q."/>
            <person name="Brinkac L.M."/>
            <person name="Madupu R."/>
            <person name="Kolonay J.F."/>
            <person name="Durkin S.A."/>
            <person name="Daugherty S.C."/>
            <person name="Shetty J."/>
            <person name="Shvartsbeyn A."/>
            <person name="Gebregeorgis E."/>
            <person name="Geer K."/>
            <person name="Tsegaye G."/>
            <person name="Malek J.A."/>
            <person name="Ayodeji B."/>
            <person name="Shatsman S."/>
            <person name="McLeod M.P."/>
            <person name="Smajs D."/>
            <person name="Howell J.K."/>
            <person name="Pal S."/>
            <person name="Amin A."/>
            <person name="Vashisth P."/>
            <person name="McNeill T.Z."/>
            <person name="Xiang Q."/>
            <person name="Sodergren E."/>
            <person name="Baca E."/>
            <person name="Weinstock G.M."/>
            <person name="Norris S.J."/>
            <person name="Fraser C.M."/>
            <person name="Paulsen I.T."/>
        </authorList>
    </citation>
    <scope>NUCLEOTIDE SEQUENCE [LARGE SCALE GENOMIC DNA]</scope>
    <source>
        <strain>ATCC 35405 / DSM 14222 / CIP 103919 / JCM 8153 / KCTC 15104</strain>
    </source>
</reference>
<gene>
    <name evidence="2" type="primary">rpsL</name>
    <name type="ordered locus">TDE_1047</name>
</gene>